<reference key="1">
    <citation type="journal article" date="1995" name="Science">
        <title>The minimal gene complement of Mycoplasma genitalium.</title>
        <authorList>
            <person name="Fraser C.M."/>
            <person name="Gocayne J.D."/>
            <person name="White O."/>
            <person name="Adams M.D."/>
            <person name="Clayton R.A."/>
            <person name="Fleischmann R.D."/>
            <person name="Bult C.J."/>
            <person name="Kerlavage A.R."/>
            <person name="Sutton G.G."/>
            <person name="Kelley J.M."/>
            <person name="Fritchman J.L."/>
            <person name="Weidman J.F."/>
            <person name="Small K.V."/>
            <person name="Sandusky M."/>
            <person name="Fuhrmann J.L."/>
            <person name="Nguyen D.T."/>
            <person name="Utterback T.R."/>
            <person name="Saudek D.M."/>
            <person name="Phillips C.A."/>
            <person name="Merrick J.M."/>
            <person name="Tomb J.-F."/>
            <person name="Dougherty B.A."/>
            <person name="Bott K.F."/>
            <person name="Hu P.-C."/>
            <person name="Lucier T.S."/>
            <person name="Peterson S.N."/>
            <person name="Smith H.O."/>
            <person name="Hutchison C.A. III"/>
            <person name="Venter J.C."/>
        </authorList>
    </citation>
    <scope>NUCLEOTIDE SEQUENCE [LARGE SCALE GENOMIC DNA]</scope>
    <source>
        <strain>ATCC 33530 / DSM 19775 / NCTC 10195 / G37</strain>
    </source>
</reference>
<reference key="2">
    <citation type="journal article" date="1993" name="J. Bacteriol.">
        <title>A survey of the Mycoplasma genitalium genome by using random sequencing.</title>
        <authorList>
            <person name="Peterson S.N."/>
            <person name="Hu P.-C."/>
            <person name="Bott K.F."/>
            <person name="Hutchison C.A. III"/>
        </authorList>
    </citation>
    <scope>NUCLEOTIDE SEQUENCE [GENOMIC DNA] OF 1-107</scope>
    <source>
        <strain>ATCC 33530 / DSM 19775 / NCTC 10195 / G37</strain>
    </source>
</reference>
<reference key="3">
    <citation type="journal article" date="2006" name="Proc. Natl. Acad. Sci. U.S.A.">
        <title>Essential genes of a minimal bacterium.</title>
        <authorList>
            <person name="Glass J.I."/>
            <person name="Assad-Garcia N."/>
            <person name="Alperovich N."/>
            <person name="Yooseph S."/>
            <person name="Lewis M.R."/>
            <person name="Maruf M."/>
            <person name="Hutchison C.A. III"/>
            <person name="Smith H.O."/>
            <person name="Venter J.C."/>
        </authorList>
    </citation>
    <scope>SEQUENCE REVISION</scope>
    <scope>DISRUPTION PHENOTYPE</scope>
    <source>
        <strain>ATCC 33530 / DSM 19775 / NCTC 10195 / G37</strain>
    </source>
</reference>
<comment type="subcellular location">
    <subcellularLocation>
        <location evidence="3">Cell membrane</location>
        <topology evidence="3">Multi-pass membrane protein</topology>
    </subcellularLocation>
</comment>
<comment type="disruption phenotype">
    <text evidence="2">Not essential, it can be deleted.</text>
</comment>
<comment type="similarity">
    <text evidence="3">To M.genitalium MG225.</text>
</comment>
<comment type="sequence caution" evidence="3">
    <conflict type="erroneous initiation">
        <sequence resource="EMBL-CDS" id="AAD12530"/>
    </conflict>
    <text>Extended N-terminus.</text>
</comment>
<dbReference type="EMBL" id="L43967">
    <property type="protein sequence ID" value="AAC71447.2"/>
    <property type="molecule type" value="Genomic_DNA"/>
</dbReference>
<dbReference type="EMBL" id="U02264">
    <property type="protein sequence ID" value="AAD12530.1"/>
    <property type="status" value="ALT_INIT"/>
    <property type="molecule type" value="Genomic_DNA"/>
</dbReference>
<dbReference type="PIR" id="I64224">
    <property type="entry name" value="I64224"/>
</dbReference>
<dbReference type="RefSeq" id="WP_010869384.1">
    <property type="nucleotide sequence ID" value="NC_000908.2"/>
</dbReference>
<dbReference type="FunCoup" id="P47468">
    <property type="interactions" value="105"/>
</dbReference>
<dbReference type="STRING" id="243273.MG_226"/>
<dbReference type="TCDB" id="2.A.3.6.5">
    <property type="family name" value="the amino acid-polyamine-organocation (apc) family"/>
</dbReference>
<dbReference type="GeneID" id="88282371"/>
<dbReference type="KEGG" id="mge:MG_226"/>
<dbReference type="eggNOG" id="COG0531">
    <property type="taxonomic scope" value="Bacteria"/>
</dbReference>
<dbReference type="HOGENOM" id="CLU_601059_0_0_14"/>
<dbReference type="InParanoid" id="P47468"/>
<dbReference type="OrthoDB" id="396415at2"/>
<dbReference type="Proteomes" id="UP000000807">
    <property type="component" value="Chromosome"/>
</dbReference>
<dbReference type="GO" id="GO:0005886">
    <property type="term" value="C:plasma membrane"/>
    <property type="evidence" value="ECO:0007669"/>
    <property type="project" value="UniProtKB-SubCell"/>
</dbReference>
<dbReference type="GO" id="GO:0055085">
    <property type="term" value="P:transmembrane transport"/>
    <property type="evidence" value="ECO:0007669"/>
    <property type="project" value="InterPro"/>
</dbReference>
<dbReference type="Gene3D" id="1.20.1740.10">
    <property type="entry name" value="Amino acid/polyamine transporter I"/>
    <property type="match status" value="1"/>
</dbReference>
<dbReference type="InterPro" id="IPR004841">
    <property type="entry name" value="AA-permease/SLC12A_dom"/>
</dbReference>
<dbReference type="InterPro" id="IPR050367">
    <property type="entry name" value="APC_superfamily"/>
</dbReference>
<dbReference type="PANTHER" id="PTHR42770">
    <property type="entry name" value="AMINO ACID TRANSPORTER-RELATED"/>
    <property type="match status" value="1"/>
</dbReference>
<dbReference type="PANTHER" id="PTHR42770:SF18">
    <property type="entry name" value="ARGININE_AGMATINE ANTIPORTER"/>
    <property type="match status" value="1"/>
</dbReference>
<dbReference type="Pfam" id="PF00324">
    <property type="entry name" value="AA_permease"/>
    <property type="match status" value="1"/>
</dbReference>
<dbReference type="PIRSF" id="PIRSF006060">
    <property type="entry name" value="AA_transporter"/>
    <property type="match status" value="1"/>
</dbReference>
<name>Y226_MYCGE</name>
<proteinExistence type="predicted"/>
<gene>
    <name type="ordered locus">MG226</name>
</gene>
<protein>
    <recommendedName>
        <fullName>Uncharacterized protein MG226</fullName>
    </recommendedName>
</protein>
<keyword id="KW-1003">Cell membrane</keyword>
<keyword id="KW-0472">Membrane</keyword>
<keyword id="KW-1185">Reference proteome</keyword>
<keyword id="KW-0812">Transmembrane</keyword>
<keyword id="KW-1133">Transmembrane helix</keyword>
<organism>
    <name type="scientific">Mycoplasma genitalium (strain ATCC 33530 / DSM 19775 / NCTC 10195 / G37)</name>
    <name type="common">Mycoplasmoides genitalium</name>
    <dbReference type="NCBI Taxonomy" id="243273"/>
    <lineage>
        <taxon>Bacteria</taxon>
        <taxon>Bacillati</taxon>
        <taxon>Mycoplasmatota</taxon>
        <taxon>Mycoplasmoidales</taxon>
        <taxon>Mycoplasmoidaceae</taxon>
        <taxon>Mycoplasmoides</taxon>
    </lineage>
</organism>
<accession>P47468</accession>
<accession>Q49367</accession>
<feature type="chain" id="PRO_0000210469" description="Uncharacterized protein MG226">
    <location>
        <begin position="1"/>
        <end position="492"/>
    </location>
</feature>
<feature type="transmembrane region" description="Helical" evidence="1">
    <location>
        <begin position="16"/>
        <end position="36"/>
    </location>
</feature>
<feature type="transmembrane region" description="Helical" evidence="1">
    <location>
        <begin position="39"/>
        <end position="59"/>
    </location>
</feature>
<feature type="transmembrane region" description="Helical" evidence="1">
    <location>
        <begin position="107"/>
        <end position="127"/>
    </location>
</feature>
<feature type="transmembrane region" description="Helical" evidence="1">
    <location>
        <begin position="133"/>
        <end position="153"/>
    </location>
</feature>
<feature type="transmembrane region" description="Helical" evidence="1">
    <location>
        <begin position="162"/>
        <end position="182"/>
    </location>
</feature>
<feature type="transmembrane region" description="Helical" evidence="1">
    <location>
        <begin position="210"/>
        <end position="230"/>
    </location>
</feature>
<feature type="transmembrane region" description="Helical" evidence="1">
    <location>
        <begin position="243"/>
        <end position="263"/>
    </location>
</feature>
<feature type="transmembrane region" description="Helical" evidence="1">
    <location>
        <begin position="291"/>
        <end position="311"/>
    </location>
</feature>
<feature type="transmembrane region" description="Helical" evidence="1">
    <location>
        <begin position="350"/>
        <end position="370"/>
    </location>
</feature>
<feature type="transmembrane region" description="Helical" evidence="1">
    <location>
        <begin position="394"/>
        <end position="414"/>
    </location>
</feature>
<feature type="transmembrane region" description="Helical" evidence="1">
    <location>
        <begin position="429"/>
        <end position="449"/>
    </location>
</feature>
<feature type="transmembrane region" description="Helical" evidence="1">
    <location>
        <begin position="454"/>
        <end position="474"/>
    </location>
</feature>
<sequence>MQTNKQPKQQFSEKQFIAFVFNYIAGFGFISVVMTMFDVGPFSYLVLGLTSFAILGVVLSFSRLSVLCGNSAYGGSYLIAKKAVGTNSKTKRFFVFLSGWNVSLTGSFNGVVIPAVLIFSFADIPVVKANNNIIIGLLVGGFLLFGLLTFISLFGLKINKKAIFYFAVIKWIVVIGGFILGIYLIGTTNGKGFVENNLIGTRENIDFFKIIFISLALTIAFAGTEDLASITPDVKSNNLRKCFLIAFGCVVLLYLVGFVIISGLDGIRGYGLALGNKDPKAINNYGSIYRLVGGVPLLVIYGLGLLVNSLASRLSMTITTARKYVALAQDGFLPSFLAKTNKHNEYHHAVLISNLMTLLVMLIMVIIPFLPDHNNNNNSLFNAIEQLVTVTIEMAAAISLIQYFITFIFFFMIFAKKENQKLIPLWEKVSYVISFALVSVLLFVPLFPFNQWTVFNTFKIVVLICFYLLGVGFFGYAEWKNKNKYQLMNNNS</sequence>
<evidence type="ECO:0000255" key="1"/>
<evidence type="ECO:0000269" key="2">
    <source>
    </source>
</evidence>
<evidence type="ECO:0000305" key="3"/>